<sequence length="1622" mass="180307">MEAEVWEAEGYNLVLDSDLYDADGYDVPDPGLLTEKNELTFTEPSQVLPFLTSSQQWQSLTPRARARRLWLLLRTSLHEVVEKEKRAELRAARLTHGLEPLRRLEVAAGLRSVAQDPVGGRFVVLDGAGRLHLHKEDGWAQETLLAPVRLTGLVTVLGPLGAVGRFVGWGPAGLAILRPNLSLLWLSEQGVGRAPGWAPTCCLPVPDLRLLLVAEMNSSLALWQFRSGGRRLVLRGSALHPPPSPTGRLMRLAVAPVPPHHVLRCFAAYGSAVLTFDLHAWTLVDVRRDLHKTTISDLAYCEEVEAMVTASRDSTVKVWEADWQIRMVFVGHTGPVTAMTVLPNTTLVLSASQDGTLRTWDLQAAAQVGEVALGFWGQDKLSRRVGRLLAPVRPGWPVLSLCASSMQLWRVRELYSPLAQLPAKVLHVQVAPALPAPAHQSLPTRLVCACADGSVYLLSAATGRIVSSLLLEPEDCAAAVAYCLPREALWLLTRAGHLVRANAARCPMSVLHRVCPPPPPAPQPCCLHLYSHLTDLEGAFSSWEIVRQHWGELRCSSVACAWKNKNRYLPVVGHTDGTLSVLEWLSSKTVFQTEAHSPGPVVAIASTWNSIVSSGGDLTVKMWRVFPYAEESLSLLRTFSCCYPAVALCALGRRVTAGFEDPDSATYGLVQFGLGDSPRLDHRPQDDPTDHITGLCCCPTLKLYACSSLDCTVRIWTAENRLLRLLQLNGAPQALAFCSNSGDLVLALGSRLCLVSHRLYLPTSYLVKKMCRKAPDVVDDPPLPLMSQESLTSAQLQRLTNLHGAASLSEALSLIHRRRATSQHLVPKEDLDAIVARDRDLQQLRLGLVVPAAQPPPSWQQRQEGFDNYLRLIYGSGLLGMQSGRGSQQWSAGTLRVERETRDVCAVPQAAHCLARAEVSTAAQTVPTALSPQDLGALGQHFSQSPRVTVPIPPTHRRVHSKASQLLARSSLSHYLGISLDLQLQLEQLRGRTTMALDLPSSHLQCRIPLLPKRWDKEPLSSLRGFFPATVQPHKHCLRPICFPGYVPNSAVLQQMWLNAEPGASQDALWLWRPRPSQTQWQRKLLQWMGEKPGEEGEEDKKEEEEEKEDEELDWALASLSPHSNQQLDSWELEDQSAVDWTQEPRRRSCKVARTHPHPWHRHGSLLLDEHYGHLPKFLHFFIYQTWFKKLFPIFSLQAYPEAGTIEGLASLLVALLEKTTWVDRVHILQVLLRLLPNMSSDLQGQLQGLLVHLLNLDQPPSLQDQTQKKFVILALQLLLACSLESRDVVLELMSYFLYSPVHCRPELKKLLHGLGLQDPEGFLFKEMMTWVQGPDLDSKAGLRTCCHQKLEDMIQELQETPSQTSVVSGAPTRASVIPSGTSWSASGIFGRLSQVSEVPLMVVSPAEPHSLAPELQAQRMLAPKRSWGTPQLRLRVLSETLKSFCLEPEARLHPAGPAQLPGEPPPLEETDWSHSQLLDLGPIDALNFFCEQLRAQQRSSLQEKAAHPHPPEPYTVAPVPDMVVPPPREHWYHPILRLQEAKPQRSARSAMRLRGPMRSRLCAGRTLDGPIRTLKLPLPRVEPQPFPLDWPMPPRPLPPRLLQPALQRYFLPADADPDTYS</sequence>
<protein>
    <recommendedName>
        <fullName evidence="6">WD repeat-containing protein 97</fullName>
    </recommendedName>
</protein>
<proteinExistence type="evidence at protein level"/>
<reference key="1">
    <citation type="journal article" date="2001" name="DNA Res.">
        <title>Prediction of the coding sequences of unidentified human genes. XX. The complete sequences of 100 new cDNA clones from brain which code for large proteins in vitro.</title>
        <authorList>
            <person name="Nagase T."/>
            <person name="Nakayama M."/>
            <person name="Nakajima D."/>
            <person name="Kikuno R."/>
            <person name="Ohara O."/>
        </authorList>
    </citation>
    <scope>NUCLEOTIDE SEQUENCE [LARGE SCALE MRNA] (ISOFORM 2)</scope>
    <scope>VARIANTS GLY-149 AND GLY-537</scope>
    <source>
        <tissue>Brain</tissue>
    </source>
</reference>
<reference key="2">
    <citation type="journal article" date="2006" name="Nature">
        <title>DNA sequence and analysis of human chromosome 8.</title>
        <authorList>
            <person name="Nusbaum C."/>
            <person name="Mikkelsen T.S."/>
            <person name="Zody M.C."/>
            <person name="Asakawa S."/>
            <person name="Taudien S."/>
            <person name="Garber M."/>
            <person name="Kodira C.D."/>
            <person name="Schueler M.G."/>
            <person name="Shimizu A."/>
            <person name="Whittaker C.A."/>
            <person name="Chang J.L."/>
            <person name="Cuomo C.A."/>
            <person name="Dewar K."/>
            <person name="FitzGerald M.G."/>
            <person name="Yang X."/>
            <person name="Allen N.R."/>
            <person name="Anderson S."/>
            <person name="Asakawa T."/>
            <person name="Blechschmidt K."/>
            <person name="Bloom T."/>
            <person name="Borowsky M.L."/>
            <person name="Butler J."/>
            <person name="Cook A."/>
            <person name="Corum B."/>
            <person name="DeArellano K."/>
            <person name="DeCaprio D."/>
            <person name="Dooley K.T."/>
            <person name="Dorris L. III"/>
            <person name="Engels R."/>
            <person name="Gloeckner G."/>
            <person name="Hafez N."/>
            <person name="Hagopian D.S."/>
            <person name="Hall J.L."/>
            <person name="Ishikawa S.K."/>
            <person name="Jaffe D.B."/>
            <person name="Kamat A."/>
            <person name="Kudoh J."/>
            <person name="Lehmann R."/>
            <person name="Lokitsang T."/>
            <person name="Macdonald P."/>
            <person name="Major J.E."/>
            <person name="Matthews C.D."/>
            <person name="Mauceli E."/>
            <person name="Menzel U."/>
            <person name="Mihalev A.H."/>
            <person name="Minoshima S."/>
            <person name="Murayama Y."/>
            <person name="Naylor J.W."/>
            <person name="Nicol R."/>
            <person name="Nguyen C."/>
            <person name="O'Leary S.B."/>
            <person name="O'Neill K."/>
            <person name="Parker S.C.J."/>
            <person name="Polley A."/>
            <person name="Raymond C.K."/>
            <person name="Reichwald K."/>
            <person name="Rodriguez J."/>
            <person name="Sasaki T."/>
            <person name="Schilhabel M."/>
            <person name="Siddiqui R."/>
            <person name="Smith C.L."/>
            <person name="Sneddon T.P."/>
            <person name="Talamas J.A."/>
            <person name="Tenzin P."/>
            <person name="Topham K."/>
            <person name="Venkataraman V."/>
            <person name="Wen G."/>
            <person name="Yamazaki S."/>
            <person name="Young S.K."/>
            <person name="Zeng Q."/>
            <person name="Zimmer A.R."/>
            <person name="Rosenthal A."/>
            <person name="Birren B.W."/>
            <person name="Platzer M."/>
            <person name="Shimizu N."/>
            <person name="Lander E.S."/>
        </authorList>
    </citation>
    <scope>NUCLEOTIDE SEQUENCE [LARGE SCALE GENOMIC DNA]</scope>
</reference>
<accession>A6NE52</accession>
<accession>Q96JF2</accession>
<feature type="chain" id="PRO_0000332994" description="WD repeat-containing protein 97">
    <location>
        <begin position="1"/>
        <end position="1622"/>
    </location>
</feature>
<feature type="repeat" description="WD 1">
    <location>
        <begin position="187"/>
        <end position="233"/>
    </location>
</feature>
<feature type="repeat" description="WD 2">
    <location>
        <begin position="290"/>
        <end position="329"/>
    </location>
</feature>
<feature type="repeat" description="WD 3">
    <location>
        <begin position="331"/>
        <end position="370"/>
    </location>
</feature>
<feature type="repeat" description="WD 4">
    <location>
        <begin position="552"/>
        <end position="592"/>
    </location>
</feature>
<feature type="repeat" description="WD 5">
    <location>
        <begin position="594"/>
        <end position="633"/>
    </location>
</feature>
<feature type="repeat" description="WD 6">
    <location>
        <begin position="687"/>
        <end position="726"/>
    </location>
</feature>
<feature type="region of interest" description="Disordered" evidence="2">
    <location>
        <begin position="1090"/>
        <end position="1112"/>
    </location>
</feature>
<feature type="region of interest" description="Disordered" evidence="2">
    <location>
        <begin position="1453"/>
        <end position="1472"/>
    </location>
</feature>
<feature type="coiled-coil region" evidence="1">
    <location>
        <begin position="1094"/>
        <end position="1118"/>
    </location>
</feature>
<feature type="compositionally biased region" description="Acidic residues" evidence="2">
    <location>
        <begin position="1096"/>
        <end position="1112"/>
    </location>
</feature>
<feature type="splice variant" id="VSP_033425" description="In isoform 2." evidence="4">
    <original>SEALSLIHRRRATSQHLVPKEDLDAIVAR</original>
    <variation>RSHGGLLSPPGGPPFPLWVGAWRCGALWS</variation>
    <location>
        <begin position="809"/>
        <end position="837"/>
    </location>
</feature>
<feature type="splice variant" id="VSP_033426" description="In isoform 2." evidence="4">
    <location>
        <begin position="838"/>
        <end position="1622"/>
    </location>
</feature>
<feature type="sequence variant" id="VAR_043029" description="In dbSNP:rs4977196." evidence="3">
    <original>R</original>
    <variation>G</variation>
    <location>
        <position position="149"/>
    </location>
</feature>
<feature type="sequence variant" id="VAR_043030" description="In dbSNP:rs34324679.">
    <original>H</original>
    <variation>Q</variation>
    <location>
        <position position="427"/>
    </location>
</feature>
<feature type="sequence variant" id="VAR_043031" description="In dbSNP:rs13250446." evidence="3">
    <original>E</original>
    <variation>G</variation>
    <location>
        <position position="537"/>
    </location>
</feature>
<feature type="sequence conflict" description="In Ref. 1; BAB47504." evidence="5" ref="1">
    <original>V</original>
    <variation>L</variation>
    <location>
        <position position="430"/>
    </location>
</feature>
<keyword id="KW-0025">Alternative splicing</keyword>
<keyword id="KW-0175">Coiled coil</keyword>
<keyword id="KW-1267">Proteomics identification</keyword>
<keyword id="KW-1185">Reference proteome</keyword>
<keyword id="KW-0677">Repeat</keyword>
<keyword id="KW-0853">WD repeat</keyword>
<gene>
    <name evidence="6" type="primary">WDR97</name>
    <name type="synonym">KIAA1875</name>
</gene>
<comment type="alternative products">
    <event type="alternative splicing"/>
    <isoform>
        <id>A6NE52-1</id>
        <name>1</name>
        <sequence type="displayed"/>
    </isoform>
    <isoform>
        <id>A6NE52-2</id>
        <name>2</name>
        <sequence type="described" ref="VSP_033425 VSP_033426"/>
    </isoform>
</comment>
<comment type="sequence caution" evidence="5">
    <conflict type="erroneous translation">
        <sequence resource="EMBL-CDS" id="BAB47504"/>
    </conflict>
    <text>Wrong choice of CDS.</text>
</comment>
<organism>
    <name type="scientific">Homo sapiens</name>
    <name type="common">Human</name>
    <dbReference type="NCBI Taxonomy" id="9606"/>
    <lineage>
        <taxon>Eukaryota</taxon>
        <taxon>Metazoa</taxon>
        <taxon>Chordata</taxon>
        <taxon>Craniata</taxon>
        <taxon>Vertebrata</taxon>
        <taxon>Euteleostomi</taxon>
        <taxon>Mammalia</taxon>
        <taxon>Eutheria</taxon>
        <taxon>Euarchontoglires</taxon>
        <taxon>Primates</taxon>
        <taxon>Haplorrhini</taxon>
        <taxon>Catarrhini</taxon>
        <taxon>Hominidae</taxon>
        <taxon>Homo</taxon>
    </lineage>
</organism>
<evidence type="ECO:0000255" key="1"/>
<evidence type="ECO:0000256" key="2">
    <source>
        <dbReference type="SAM" id="MobiDB-lite"/>
    </source>
</evidence>
<evidence type="ECO:0000269" key="3">
    <source>
    </source>
</evidence>
<evidence type="ECO:0000303" key="4">
    <source>
    </source>
</evidence>
<evidence type="ECO:0000305" key="5"/>
<evidence type="ECO:0000312" key="6">
    <source>
        <dbReference type="HGNC" id="HGNC:26959"/>
    </source>
</evidence>
<name>WDR97_HUMAN</name>
<dbReference type="EMBL" id="AB058778">
    <property type="protein sequence ID" value="BAB47504.1"/>
    <property type="status" value="ALT_SEQ"/>
    <property type="molecule type" value="mRNA"/>
</dbReference>
<dbReference type="EMBL" id="AC104592">
    <property type="status" value="NOT_ANNOTATED_CDS"/>
    <property type="molecule type" value="Genomic_DNA"/>
</dbReference>
<dbReference type="CCDS" id="CCDS83334.1">
    <molecule id="A6NE52-1"/>
</dbReference>
<dbReference type="RefSeq" id="NP_001303238.1">
    <molecule id="A6NE52-1"/>
    <property type="nucleotide sequence ID" value="NM_001316309.2"/>
</dbReference>
<dbReference type="IntAct" id="A6NE52">
    <property type="interactions" value="1"/>
</dbReference>
<dbReference type="STRING" id="9606.ENSP00000320648"/>
<dbReference type="GlyGen" id="A6NE52">
    <property type="glycosylation" value="1 site"/>
</dbReference>
<dbReference type="iPTMnet" id="A6NE52"/>
<dbReference type="PhosphoSitePlus" id="A6NE52"/>
<dbReference type="BioMuta" id="WDR97"/>
<dbReference type="jPOST" id="A6NE52"/>
<dbReference type="MassIVE" id="A6NE52"/>
<dbReference type="PaxDb" id="9606-ENSP00000320648"/>
<dbReference type="PeptideAtlas" id="A6NE52"/>
<dbReference type="ProteomicsDB" id="959">
    <molecule id="A6NE52-1"/>
</dbReference>
<dbReference type="ProteomicsDB" id="960">
    <molecule id="A6NE52-2"/>
</dbReference>
<dbReference type="Antibodypedia" id="71324">
    <property type="antibodies" value="5 antibodies from 5 providers"/>
</dbReference>
<dbReference type="Ensembl" id="ENST00000323662.9">
    <molecule id="A6NE52-1"/>
    <property type="protein sequence ID" value="ENSP00000320648.8"/>
    <property type="gene ID" value="ENSG00000179698.14"/>
</dbReference>
<dbReference type="GeneID" id="340390"/>
<dbReference type="KEGG" id="hsa:340390"/>
<dbReference type="MANE-Select" id="ENST00000323662.9">
    <property type="protein sequence ID" value="ENSP00000320648.8"/>
    <property type="RefSeq nucleotide sequence ID" value="NM_001316309.2"/>
    <property type="RefSeq protein sequence ID" value="NP_001303238.1"/>
</dbReference>
<dbReference type="UCSC" id="uc064riy.1">
    <molecule id="A6NE52-1"/>
    <property type="organism name" value="human"/>
</dbReference>
<dbReference type="AGR" id="HGNC:26959"/>
<dbReference type="CTD" id="340390"/>
<dbReference type="GeneCards" id="WDR97"/>
<dbReference type="HGNC" id="HGNC:26959">
    <property type="gene designation" value="WDR97"/>
</dbReference>
<dbReference type="HPA" id="ENSG00000179698">
    <property type="expression patterns" value="Tissue enriched (testis)"/>
</dbReference>
<dbReference type="neXtProt" id="NX_A6NE52"/>
<dbReference type="OpenTargets" id="ENSG00000179698"/>
<dbReference type="VEuPathDB" id="HostDB:ENSG00000179698"/>
<dbReference type="eggNOG" id="KOG0321">
    <property type="taxonomic scope" value="Eukaryota"/>
</dbReference>
<dbReference type="GeneTree" id="ENSGT00940000164199"/>
<dbReference type="HOGENOM" id="CLU_244603_0_0_1"/>
<dbReference type="InParanoid" id="A6NE52"/>
<dbReference type="OMA" id="TWFKELF"/>
<dbReference type="OrthoDB" id="6262491at2759"/>
<dbReference type="PAN-GO" id="A6NE52">
    <property type="GO annotations" value="0 GO annotations based on evolutionary models"/>
</dbReference>
<dbReference type="PhylomeDB" id="A6NE52"/>
<dbReference type="PathwayCommons" id="A6NE52"/>
<dbReference type="SignaLink" id="A6NE52"/>
<dbReference type="BioGRID-ORCS" id="340390">
    <property type="hits" value="1 hit in 145 CRISPR screens"/>
</dbReference>
<dbReference type="GenomeRNAi" id="340390"/>
<dbReference type="Pharos" id="A6NE52">
    <property type="development level" value="Tdark"/>
</dbReference>
<dbReference type="PRO" id="PR:A6NE52"/>
<dbReference type="Proteomes" id="UP000005640">
    <property type="component" value="Chromosome 8"/>
</dbReference>
<dbReference type="RNAct" id="A6NE52">
    <property type="molecule type" value="protein"/>
</dbReference>
<dbReference type="Bgee" id="ENSG00000179698">
    <property type="expression patterns" value="Expressed in left testis and 84 other cell types or tissues"/>
</dbReference>
<dbReference type="ExpressionAtlas" id="A6NE52">
    <property type="expression patterns" value="baseline and differential"/>
</dbReference>
<dbReference type="Gene3D" id="2.130.10.10">
    <property type="entry name" value="YVTN repeat-like/Quinoprotein amine dehydrogenase"/>
    <property type="match status" value="2"/>
</dbReference>
<dbReference type="InterPro" id="IPR015943">
    <property type="entry name" value="WD40/YVTN_repeat-like_dom_sf"/>
</dbReference>
<dbReference type="InterPro" id="IPR019775">
    <property type="entry name" value="WD40_repeat_CS"/>
</dbReference>
<dbReference type="InterPro" id="IPR036322">
    <property type="entry name" value="WD40_repeat_dom_sf"/>
</dbReference>
<dbReference type="InterPro" id="IPR001680">
    <property type="entry name" value="WD40_rpt"/>
</dbReference>
<dbReference type="PANTHER" id="PTHR45532">
    <property type="entry name" value="WD REPEAT-CONTAINING PROTEIN 97"/>
    <property type="match status" value="1"/>
</dbReference>
<dbReference type="PANTHER" id="PTHR45532:SF1">
    <property type="entry name" value="WD REPEAT-CONTAINING PROTEIN 97"/>
    <property type="match status" value="1"/>
</dbReference>
<dbReference type="Pfam" id="PF00400">
    <property type="entry name" value="WD40"/>
    <property type="match status" value="3"/>
</dbReference>
<dbReference type="SMART" id="SM00320">
    <property type="entry name" value="WD40"/>
    <property type="match status" value="6"/>
</dbReference>
<dbReference type="SUPFAM" id="SSF69322">
    <property type="entry name" value="Tricorn protease domain 2"/>
    <property type="match status" value="1"/>
</dbReference>
<dbReference type="SUPFAM" id="SSF50978">
    <property type="entry name" value="WD40 repeat-like"/>
    <property type="match status" value="1"/>
</dbReference>
<dbReference type="PROSITE" id="PS00678">
    <property type="entry name" value="WD_REPEATS_1"/>
    <property type="match status" value="2"/>
</dbReference>
<dbReference type="PROSITE" id="PS50082">
    <property type="entry name" value="WD_REPEATS_2"/>
    <property type="match status" value="2"/>
</dbReference>
<dbReference type="PROSITE" id="PS50294">
    <property type="entry name" value="WD_REPEATS_REGION"/>
    <property type="match status" value="1"/>
</dbReference>